<comment type="function">
    <text evidence="1">Catalyzes the formation of 4-diphosphocytidyl-2-C-methyl-D-erythritol from CTP and 2-C-methyl-D-erythritol 4-phosphate (MEP).</text>
</comment>
<comment type="catalytic activity">
    <reaction evidence="1">
        <text>2-C-methyl-D-erythritol 4-phosphate + CTP + H(+) = 4-CDP-2-C-methyl-D-erythritol + diphosphate</text>
        <dbReference type="Rhea" id="RHEA:13429"/>
        <dbReference type="ChEBI" id="CHEBI:15378"/>
        <dbReference type="ChEBI" id="CHEBI:33019"/>
        <dbReference type="ChEBI" id="CHEBI:37563"/>
        <dbReference type="ChEBI" id="CHEBI:57823"/>
        <dbReference type="ChEBI" id="CHEBI:58262"/>
        <dbReference type="EC" id="2.7.7.60"/>
    </reaction>
</comment>
<comment type="pathway">
    <text evidence="1">Isoprenoid biosynthesis; isopentenyl diphosphate biosynthesis via DXP pathway; isopentenyl diphosphate from 1-deoxy-D-xylulose 5-phosphate: step 2/6.</text>
</comment>
<comment type="similarity">
    <text evidence="1">Belongs to the IspD/TarI cytidylyltransferase family. IspD subfamily.</text>
</comment>
<name>ISPD_FUSNN</name>
<keyword id="KW-0414">Isoprene biosynthesis</keyword>
<keyword id="KW-0548">Nucleotidyltransferase</keyword>
<keyword id="KW-1185">Reference proteome</keyword>
<keyword id="KW-0808">Transferase</keyword>
<proteinExistence type="inferred from homology"/>
<accession>Q8R6H2</accession>
<protein>
    <recommendedName>
        <fullName evidence="1">2-C-methyl-D-erythritol 4-phosphate cytidylyltransferase</fullName>
        <ecNumber evidence="1">2.7.7.60</ecNumber>
    </recommendedName>
    <alternativeName>
        <fullName evidence="1">4-diphosphocytidyl-2C-methyl-D-erythritol synthase</fullName>
    </alternativeName>
    <alternativeName>
        <fullName evidence="1">MEP cytidylyltransferase</fullName>
        <shortName evidence="1">MCT</shortName>
    </alternativeName>
</protein>
<gene>
    <name evidence="1" type="primary">ispD</name>
    <name type="ordered locus">FN1580</name>
</gene>
<evidence type="ECO:0000255" key="1">
    <source>
        <dbReference type="HAMAP-Rule" id="MF_00108"/>
    </source>
</evidence>
<reference key="1">
    <citation type="journal article" date="2002" name="J. Bacteriol.">
        <title>Genome sequence and analysis of the oral bacterium Fusobacterium nucleatum strain ATCC 25586.</title>
        <authorList>
            <person name="Kapatral V."/>
            <person name="Anderson I."/>
            <person name="Ivanova N."/>
            <person name="Reznik G."/>
            <person name="Los T."/>
            <person name="Lykidis A."/>
            <person name="Bhattacharyya A."/>
            <person name="Bartman A."/>
            <person name="Gardner W."/>
            <person name="Grechkin G."/>
            <person name="Zhu L."/>
            <person name="Vasieva O."/>
            <person name="Chu L."/>
            <person name="Kogan Y."/>
            <person name="Chaga O."/>
            <person name="Goltsman E."/>
            <person name="Bernal A."/>
            <person name="Larsen N."/>
            <person name="D'Souza M."/>
            <person name="Walunas T."/>
            <person name="Pusch G."/>
            <person name="Haselkorn R."/>
            <person name="Fonstein M."/>
            <person name="Kyrpides N.C."/>
            <person name="Overbeek R."/>
        </authorList>
    </citation>
    <scope>NUCLEOTIDE SEQUENCE [LARGE SCALE GENOMIC DNA]</scope>
    <source>
        <strain>ATCC 25586 / DSM 15643 / BCRC 10681 / CIP 101130 / JCM 8532 / KCTC 2640 / LMG 13131 / VPI 4355</strain>
    </source>
</reference>
<organism>
    <name type="scientific">Fusobacterium nucleatum subsp. nucleatum (strain ATCC 25586 / DSM 15643 / BCRC 10681 / CIP 101130 / JCM 8532 / KCTC 2640 / LMG 13131 / VPI 4355)</name>
    <dbReference type="NCBI Taxonomy" id="190304"/>
    <lineage>
        <taxon>Bacteria</taxon>
        <taxon>Fusobacteriati</taxon>
        <taxon>Fusobacteriota</taxon>
        <taxon>Fusobacteriia</taxon>
        <taxon>Fusobacteriales</taxon>
        <taxon>Fusobacteriaceae</taxon>
        <taxon>Fusobacterium</taxon>
    </lineage>
</organism>
<sequence>MYSSNSEIKKKVTFILAAAGQGKRMNLNSPKQFLDYRGEPLFYSSLKLAFENKNINDIIIITNKENLNFMVKYCQNKNLFSKVKYIVEGGSERQYSIYNAIKKIKDTDIVIIQDAARPFLKDKYIEESLKILNDDCDGAIIGVKCKDTIKIIDENGIVLETPNRDNLIMVHTPQTFKFEILKKAHQMAEEKNILATDDASLVEMISGKIKIIYGDYDNIKITVQEDLKFLK</sequence>
<dbReference type="EC" id="2.7.7.60" evidence="1"/>
<dbReference type="EMBL" id="AE009951">
    <property type="protein sequence ID" value="AAL93695.1"/>
    <property type="molecule type" value="Genomic_DNA"/>
</dbReference>
<dbReference type="RefSeq" id="NP_602396.1">
    <property type="nucleotide sequence ID" value="NC_003454.1"/>
</dbReference>
<dbReference type="RefSeq" id="WP_011015681.1">
    <property type="nucleotide sequence ID" value="NZ_OZ209243.1"/>
</dbReference>
<dbReference type="SMR" id="Q8R6H2"/>
<dbReference type="FunCoup" id="Q8R6H2">
    <property type="interactions" value="255"/>
</dbReference>
<dbReference type="STRING" id="190304.FN1580"/>
<dbReference type="PaxDb" id="190304-FN1580"/>
<dbReference type="EnsemblBacteria" id="AAL93695">
    <property type="protein sequence ID" value="AAL93695"/>
    <property type="gene ID" value="FN1580"/>
</dbReference>
<dbReference type="GeneID" id="79782521"/>
<dbReference type="KEGG" id="fnu:FN1580"/>
<dbReference type="PATRIC" id="fig|190304.8.peg.72"/>
<dbReference type="eggNOG" id="COG1211">
    <property type="taxonomic scope" value="Bacteria"/>
</dbReference>
<dbReference type="HOGENOM" id="CLU_061281_2_3_0"/>
<dbReference type="InParanoid" id="Q8R6H2"/>
<dbReference type="BioCyc" id="FNUC190304:G1FZS-84-MONOMER"/>
<dbReference type="UniPathway" id="UPA00056">
    <property type="reaction ID" value="UER00093"/>
</dbReference>
<dbReference type="Proteomes" id="UP000002521">
    <property type="component" value="Chromosome"/>
</dbReference>
<dbReference type="GO" id="GO:0050518">
    <property type="term" value="F:2-C-methyl-D-erythritol 4-phosphate cytidylyltransferase activity"/>
    <property type="evidence" value="ECO:0000318"/>
    <property type="project" value="GO_Central"/>
</dbReference>
<dbReference type="GO" id="GO:0019288">
    <property type="term" value="P:isopentenyl diphosphate biosynthetic process, methylerythritol 4-phosphate pathway"/>
    <property type="evidence" value="ECO:0007669"/>
    <property type="project" value="UniProtKB-UniRule"/>
</dbReference>
<dbReference type="CDD" id="cd02516">
    <property type="entry name" value="CDP-ME_synthetase"/>
    <property type="match status" value="1"/>
</dbReference>
<dbReference type="FunFam" id="3.90.550.10:FF:000464">
    <property type="entry name" value="2-C-methyl-D-erythritol 4-phosphate cytidylyltransferase"/>
    <property type="match status" value="1"/>
</dbReference>
<dbReference type="Gene3D" id="3.90.550.10">
    <property type="entry name" value="Spore Coat Polysaccharide Biosynthesis Protein SpsA, Chain A"/>
    <property type="match status" value="1"/>
</dbReference>
<dbReference type="HAMAP" id="MF_00108">
    <property type="entry name" value="IspD"/>
    <property type="match status" value="1"/>
</dbReference>
<dbReference type="InterPro" id="IPR001228">
    <property type="entry name" value="IspD"/>
</dbReference>
<dbReference type="InterPro" id="IPR034683">
    <property type="entry name" value="IspD/TarI"/>
</dbReference>
<dbReference type="InterPro" id="IPR050088">
    <property type="entry name" value="IspD/TarI_cytidylyltransf_bact"/>
</dbReference>
<dbReference type="InterPro" id="IPR029044">
    <property type="entry name" value="Nucleotide-diphossugar_trans"/>
</dbReference>
<dbReference type="NCBIfam" id="TIGR00453">
    <property type="entry name" value="ispD"/>
    <property type="match status" value="1"/>
</dbReference>
<dbReference type="PANTHER" id="PTHR32125">
    <property type="entry name" value="2-C-METHYL-D-ERYTHRITOL 4-PHOSPHATE CYTIDYLYLTRANSFERASE, CHLOROPLASTIC"/>
    <property type="match status" value="1"/>
</dbReference>
<dbReference type="PANTHER" id="PTHR32125:SF4">
    <property type="entry name" value="2-C-METHYL-D-ERYTHRITOL 4-PHOSPHATE CYTIDYLYLTRANSFERASE, CHLOROPLASTIC"/>
    <property type="match status" value="1"/>
</dbReference>
<dbReference type="Pfam" id="PF01128">
    <property type="entry name" value="IspD"/>
    <property type="match status" value="1"/>
</dbReference>
<dbReference type="SUPFAM" id="SSF53448">
    <property type="entry name" value="Nucleotide-diphospho-sugar transferases"/>
    <property type="match status" value="1"/>
</dbReference>
<feature type="chain" id="PRO_0000075575" description="2-C-methyl-D-erythritol 4-phosphate cytidylyltransferase">
    <location>
        <begin position="1"/>
        <end position="231"/>
    </location>
</feature>
<feature type="site" description="Transition state stabilizer" evidence="1">
    <location>
        <position position="24"/>
    </location>
</feature>
<feature type="site" description="Transition state stabilizer" evidence="1">
    <location>
        <position position="31"/>
    </location>
</feature>
<feature type="site" description="Positions MEP for the nucleophilic attack" evidence="1">
    <location>
        <position position="164"/>
    </location>
</feature>
<feature type="site" description="Positions MEP for the nucleophilic attack" evidence="1">
    <location>
        <position position="220"/>
    </location>
</feature>